<proteinExistence type="inferred from homology"/>
<sequence>MAKANVRVRKKVKKNIAEGIAHVHASFNNTIITITDRQGNALSWATSGGAGFKGSRKSTPFAAQVAAEAAGKAAQECGVKNLEVRIKGPGPGRESAVRALNAVGFKITSISDVTPVPHNGCRPPKKRRI</sequence>
<evidence type="ECO:0000255" key="1">
    <source>
        <dbReference type="HAMAP-Rule" id="MF_01310"/>
    </source>
</evidence>
<evidence type="ECO:0000305" key="2"/>
<comment type="function">
    <text evidence="1">Located on the platform of the 30S subunit, it bridges several disparate RNA helices of the 16S rRNA. Forms part of the Shine-Dalgarno cleft in the 70S ribosome.</text>
</comment>
<comment type="subunit">
    <text evidence="1">Part of the 30S ribosomal subunit. Interacts with proteins S7 and S18. Binds to IF-3.</text>
</comment>
<comment type="similarity">
    <text evidence="1">Belongs to the universal ribosomal protein uS11 family.</text>
</comment>
<reference key="1">
    <citation type="submission" date="2006-03" db="EMBL/GenBank/DDBJ databases">
        <title>Complete sequence of Methylobacillus flagellatus KT.</title>
        <authorList>
            <consortium name="US DOE Joint Genome Institute"/>
            <person name="Copeland A."/>
            <person name="Lucas S."/>
            <person name="Lapidus A."/>
            <person name="Barry K."/>
            <person name="Detter J.C."/>
            <person name="Glavina del Rio T."/>
            <person name="Hammon N."/>
            <person name="Israni S."/>
            <person name="Dalin E."/>
            <person name="Tice H."/>
            <person name="Pitluck S."/>
            <person name="Brettin T."/>
            <person name="Bruce D."/>
            <person name="Han C."/>
            <person name="Tapia R."/>
            <person name="Saunders E."/>
            <person name="Gilna P."/>
            <person name="Schmutz J."/>
            <person name="Larimer F."/>
            <person name="Land M."/>
            <person name="Kyrpides N."/>
            <person name="Anderson I."/>
            <person name="Richardson P."/>
        </authorList>
    </citation>
    <scope>NUCLEOTIDE SEQUENCE [LARGE SCALE GENOMIC DNA]</scope>
    <source>
        <strain>ATCC 51484 / DSM 6875 / VKM B-1610 / KT</strain>
    </source>
</reference>
<protein>
    <recommendedName>
        <fullName evidence="1">Small ribosomal subunit protein uS11</fullName>
    </recommendedName>
    <alternativeName>
        <fullName evidence="2">30S ribosomal protein S11</fullName>
    </alternativeName>
</protein>
<feature type="chain" id="PRO_0000294792" description="Small ribosomal subunit protein uS11">
    <location>
        <begin position="1"/>
        <end position="129"/>
    </location>
</feature>
<dbReference type="EMBL" id="CP000284">
    <property type="protein sequence ID" value="ABE48574.1"/>
    <property type="molecule type" value="Genomic_DNA"/>
</dbReference>
<dbReference type="RefSeq" id="WP_011478671.1">
    <property type="nucleotide sequence ID" value="NC_007947.1"/>
</dbReference>
<dbReference type="SMR" id="Q1H4L3"/>
<dbReference type="STRING" id="265072.Mfla_0303"/>
<dbReference type="KEGG" id="mfa:Mfla_0303"/>
<dbReference type="eggNOG" id="COG0100">
    <property type="taxonomic scope" value="Bacteria"/>
</dbReference>
<dbReference type="HOGENOM" id="CLU_072439_5_0_4"/>
<dbReference type="OrthoDB" id="9806415at2"/>
<dbReference type="Proteomes" id="UP000002440">
    <property type="component" value="Chromosome"/>
</dbReference>
<dbReference type="GO" id="GO:1990904">
    <property type="term" value="C:ribonucleoprotein complex"/>
    <property type="evidence" value="ECO:0007669"/>
    <property type="project" value="UniProtKB-KW"/>
</dbReference>
<dbReference type="GO" id="GO:0005840">
    <property type="term" value="C:ribosome"/>
    <property type="evidence" value="ECO:0007669"/>
    <property type="project" value="UniProtKB-KW"/>
</dbReference>
<dbReference type="GO" id="GO:0019843">
    <property type="term" value="F:rRNA binding"/>
    <property type="evidence" value="ECO:0007669"/>
    <property type="project" value="UniProtKB-UniRule"/>
</dbReference>
<dbReference type="GO" id="GO:0003735">
    <property type="term" value="F:structural constituent of ribosome"/>
    <property type="evidence" value="ECO:0007669"/>
    <property type="project" value="InterPro"/>
</dbReference>
<dbReference type="GO" id="GO:0006412">
    <property type="term" value="P:translation"/>
    <property type="evidence" value="ECO:0007669"/>
    <property type="project" value="UniProtKB-UniRule"/>
</dbReference>
<dbReference type="FunFam" id="3.30.420.80:FF:000001">
    <property type="entry name" value="30S ribosomal protein S11"/>
    <property type="match status" value="1"/>
</dbReference>
<dbReference type="Gene3D" id="3.30.420.80">
    <property type="entry name" value="Ribosomal protein S11"/>
    <property type="match status" value="1"/>
</dbReference>
<dbReference type="HAMAP" id="MF_01310">
    <property type="entry name" value="Ribosomal_uS11"/>
    <property type="match status" value="1"/>
</dbReference>
<dbReference type="InterPro" id="IPR001971">
    <property type="entry name" value="Ribosomal_uS11"/>
</dbReference>
<dbReference type="InterPro" id="IPR019981">
    <property type="entry name" value="Ribosomal_uS11_bac-type"/>
</dbReference>
<dbReference type="InterPro" id="IPR018102">
    <property type="entry name" value="Ribosomal_uS11_CS"/>
</dbReference>
<dbReference type="InterPro" id="IPR036967">
    <property type="entry name" value="Ribosomal_uS11_sf"/>
</dbReference>
<dbReference type="NCBIfam" id="NF003698">
    <property type="entry name" value="PRK05309.1"/>
    <property type="match status" value="1"/>
</dbReference>
<dbReference type="NCBIfam" id="TIGR03632">
    <property type="entry name" value="uS11_bact"/>
    <property type="match status" value="1"/>
</dbReference>
<dbReference type="PANTHER" id="PTHR11759">
    <property type="entry name" value="40S RIBOSOMAL PROTEIN S14/30S RIBOSOMAL PROTEIN S11"/>
    <property type="match status" value="1"/>
</dbReference>
<dbReference type="Pfam" id="PF00411">
    <property type="entry name" value="Ribosomal_S11"/>
    <property type="match status" value="1"/>
</dbReference>
<dbReference type="PIRSF" id="PIRSF002131">
    <property type="entry name" value="Ribosomal_S11"/>
    <property type="match status" value="1"/>
</dbReference>
<dbReference type="SUPFAM" id="SSF53137">
    <property type="entry name" value="Translational machinery components"/>
    <property type="match status" value="1"/>
</dbReference>
<dbReference type="PROSITE" id="PS00054">
    <property type="entry name" value="RIBOSOMAL_S11"/>
    <property type="match status" value="1"/>
</dbReference>
<organism>
    <name type="scientific">Methylobacillus flagellatus (strain ATCC 51484 / DSM 6875 / VKM B-1610 / KT)</name>
    <dbReference type="NCBI Taxonomy" id="265072"/>
    <lineage>
        <taxon>Bacteria</taxon>
        <taxon>Pseudomonadati</taxon>
        <taxon>Pseudomonadota</taxon>
        <taxon>Betaproteobacteria</taxon>
        <taxon>Nitrosomonadales</taxon>
        <taxon>Methylophilaceae</taxon>
        <taxon>Methylobacillus</taxon>
    </lineage>
</organism>
<keyword id="KW-1185">Reference proteome</keyword>
<keyword id="KW-0687">Ribonucleoprotein</keyword>
<keyword id="KW-0689">Ribosomal protein</keyword>
<keyword id="KW-0694">RNA-binding</keyword>
<keyword id="KW-0699">rRNA-binding</keyword>
<name>RS11_METFK</name>
<accession>Q1H4L3</accession>
<gene>
    <name evidence="1" type="primary">rpsK</name>
    <name type="ordered locus">Mfla_0303</name>
</gene>